<dbReference type="EC" id="2.1.3.15" evidence="1"/>
<dbReference type="EMBL" id="AP008937">
    <property type="protein sequence ID" value="BAG26654.1"/>
    <property type="molecule type" value="Genomic_DNA"/>
</dbReference>
<dbReference type="RefSeq" id="WP_004563305.1">
    <property type="nucleotide sequence ID" value="NC_010610.1"/>
</dbReference>
<dbReference type="SMR" id="B2GAH2"/>
<dbReference type="KEGG" id="lfe:LAF_0318"/>
<dbReference type="eggNOG" id="COG0777">
    <property type="taxonomic scope" value="Bacteria"/>
</dbReference>
<dbReference type="HOGENOM" id="CLU_015486_1_1_9"/>
<dbReference type="UniPathway" id="UPA00655">
    <property type="reaction ID" value="UER00711"/>
</dbReference>
<dbReference type="Proteomes" id="UP000001697">
    <property type="component" value="Chromosome"/>
</dbReference>
<dbReference type="GO" id="GO:0009317">
    <property type="term" value="C:acetyl-CoA carboxylase complex"/>
    <property type="evidence" value="ECO:0007669"/>
    <property type="project" value="InterPro"/>
</dbReference>
<dbReference type="GO" id="GO:0003989">
    <property type="term" value="F:acetyl-CoA carboxylase activity"/>
    <property type="evidence" value="ECO:0007669"/>
    <property type="project" value="InterPro"/>
</dbReference>
<dbReference type="GO" id="GO:0005524">
    <property type="term" value="F:ATP binding"/>
    <property type="evidence" value="ECO:0007669"/>
    <property type="project" value="UniProtKB-KW"/>
</dbReference>
<dbReference type="GO" id="GO:0016743">
    <property type="term" value="F:carboxyl- or carbamoyltransferase activity"/>
    <property type="evidence" value="ECO:0007669"/>
    <property type="project" value="UniProtKB-UniRule"/>
</dbReference>
<dbReference type="GO" id="GO:0008270">
    <property type="term" value="F:zinc ion binding"/>
    <property type="evidence" value="ECO:0007669"/>
    <property type="project" value="UniProtKB-UniRule"/>
</dbReference>
<dbReference type="GO" id="GO:0006633">
    <property type="term" value="P:fatty acid biosynthetic process"/>
    <property type="evidence" value="ECO:0007669"/>
    <property type="project" value="UniProtKB-KW"/>
</dbReference>
<dbReference type="GO" id="GO:2001295">
    <property type="term" value="P:malonyl-CoA biosynthetic process"/>
    <property type="evidence" value="ECO:0007669"/>
    <property type="project" value="UniProtKB-UniRule"/>
</dbReference>
<dbReference type="Gene3D" id="3.90.226.10">
    <property type="entry name" value="2-enoyl-CoA Hydratase, Chain A, domain 1"/>
    <property type="match status" value="1"/>
</dbReference>
<dbReference type="HAMAP" id="MF_01395">
    <property type="entry name" value="AcetylCoA_CT_beta"/>
    <property type="match status" value="1"/>
</dbReference>
<dbReference type="InterPro" id="IPR034733">
    <property type="entry name" value="AcCoA_carboxyl_beta"/>
</dbReference>
<dbReference type="InterPro" id="IPR000438">
    <property type="entry name" value="Acetyl_CoA_COase_Trfase_b_su"/>
</dbReference>
<dbReference type="InterPro" id="IPR029045">
    <property type="entry name" value="ClpP/crotonase-like_dom_sf"/>
</dbReference>
<dbReference type="InterPro" id="IPR011762">
    <property type="entry name" value="COA_CT_N"/>
</dbReference>
<dbReference type="PANTHER" id="PTHR42995">
    <property type="entry name" value="ACETYL-COENZYME A CARBOXYLASE CARBOXYL TRANSFERASE SUBUNIT BETA, CHLOROPLASTIC"/>
    <property type="match status" value="1"/>
</dbReference>
<dbReference type="PANTHER" id="PTHR42995:SF5">
    <property type="entry name" value="ACETYL-COENZYME A CARBOXYLASE CARBOXYL TRANSFERASE SUBUNIT BETA, CHLOROPLASTIC"/>
    <property type="match status" value="1"/>
</dbReference>
<dbReference type="Pfam" id="PF01039">
    <property type="entry name" value="Carboxyl_trans"/>
    <property type="match status" value="1"/>
</dbReference>
<dbReference type="PRINTS" id="PR01070">
    <property type="entry name" value="ACCCTRFRASEB"/>
</dbReference>
<dbReference type="SUPFAM" id="SSF52096">
    <property type="entry name" value="ClpP/crotonase"/>
    <property type="match status" value="1"/>
</dbReference>
<dbReference type="PROSITE" id="PS50980">
    <property type="entry name" value="COA_CT_NTER"/>
    <property type="match status" value="1"/>
</dbReference>
<proteinExistence type="inferred from homology"/>
<organism>
    <name type="scientific">Limosilactobacillus fermentum (strain NBRC 3956 / LMG 18251)</name>
    <name type="common">Lactobacillus fermentum</name>
    <dbReference type="NCBI Taxonomy" id="334390"/>
    <lineage>
        <taxon>Bacteria</taxon>
        <taxon>Bacillati</taxon>
        <taxon>Bacillota</taxon>
        <taxon>Bacilli</taxon>
        <taxon>Lactobacillales</taxon>
        <taxon>Lactobacillaceae</taxon>
        <taxon>Limosilactobacillus</taxon>
    </lineage>
</organism>
<name>ACCD_LIMF3</name>
<accession>B2GAH2</accession>
<keyword id="KW-0067">ATP-binding</keyword>
<keyword id="KW-0963">Cytoplasm</keyword>
<keyword id="KW-0275">Fatty acid biosynthesis</keyword>
<keyword id="KW-0276">Fatty acid metabolism</keyword>
<keyword id="KW-0444">Lipid biosynthesis</keyword>
<keyword id="KW-0443">Lipid metabolism</keyword>
<keyword id="KW-0479">Metal-binding</keyword>
<keyword id="KW-0547">Nucleotide-binding</keyword>
<keyword id="KW-1185">Reference proteome</keyword>
<keyword id="KW-0808">Transferase</keyword>
<keyword id="KW-0862">Zinc</keyword>
<keyword id="KW-0863">Zinc-finger</keyword>
<gene>
    <name evidence="1" type="primary">accD</name>
    <name type="ordered locus">LAF_0318</name>
</gene>
<sequence length="282" mass="30978">MKLYKAKNTLSERHVQADRTADAKVPDDLWRTCPKCQRTLFAAQMDEYATCPGCGYGFRISANQRLSWLVDSAVPMDTALQTQDPLNFPGYEGKLKKAQEKSGLNDSVWTGRARIGDVDFNLGIMDPTFIMGSLGTITGEKITRLFEDATKNQRPVVLFTASGGARMQEGIMSLMQMAKVSTAIAEHDAAGLLYIVVLTDPTTGGVTASFAMEGDVILAEPRALVGFAGRRVIEQTTHTEIPADLQDAENVLKHGFIDHIVTRQDEKTTLAWLMKYGGKQND</sequence>
<evidence type="ECO:0000255" key="1">
    <source>
        <dbReference type="HAMAP-Rule" id="MF_01395"/>
    </source>
</evidence>
<evidence type="ECO:0000255" key="2">
    <source>
        <dbReference type="PROSITE-ProRule" id="PRU01136"/>
    </source>
</evidence>
<reference key="1">
    <citation type="journal article" date="2008" name="DNA Res.">
        <title>Comparative genome analysis of Lactobacillus reuteri and Lactobacillus fermentum reveal a genomic island for reuterin and cobalamin production.</title>
        <authorList>
            <person name="Morita H."/>
            <person name="Toh H."/>
            <person name="Fukuda S."/>
            <person name="Horikawa H."/>
            <person name="Oshima K."/>
            <person name="Suzuki T."/>
            <person name="Murakami M."/>
            <person name="Hisamatsu S."/>
            <person name="Kato Y."/>
            <person name="Takizawa T."/>
            <person name="Fukuoka H."/>
            <person name="Yoshimura T."/>
            <person name="Itoh K."/>
            <person name="O'Sullivan D.J."/>
            <person name="McKay L.L."/>
            <person name="Ohno H."/>
            <person name="Kikuchi J."/>
            <person name="Masaoka T."/>
            <person name="Hattori M."/>
        </authorList>
    </citation>
    <scope>NUCLEOTIDE SEQUENCE [LARGE SCALE GENOMIC DNA]</scope>
    <source>
        <strain>NBRC 3956 / LMG 18251</strain>
    </source>
</reference>
<feature type="chain" id="PRO_0000389765" description="Acetyl-coenzyme A carboxylase carboxyl transferase subunit beta">
    <location>
        <begin position="1"/>
        <end position="282"/>
    </location>
</feature>
<feature type="domain" description="CoA carboxyltransferase N-terminal" evidence="2">
    <location>
        <begin position="29"/>
        <end position="282"/>
    </location>
</feature>
<feature type="zinc finger region" description="C4-type" evidence="1">
    <location>
        <begin position="33"/>
        <end position="54"/>
    </location>
</feature>
<feature type="binding site" evidence="1">
    <location>
        <position position="33"/>
    </location>
    <ligand>
        <name>Zn(2+)</name>
        <dbReference type="ChEBI" id="CHEBI:29105"/>
    </ligand>
</feature>
<feature type="binding site" evidence="1">
    <location>
        <position position="36"/>
    </location>
    <ligand>
        <name>Zn(2+)</name>
        <dbReference type="ChEBI" id="CHEBI:29105"/>
    </ligand>
</feature>
<feature type="binding site" evidence="1">
    <location>
        <position position="51"/>
    </location>
    <ligand>
        <name>Zn(2+)</name>
        <dbReference type="ChEBI" id="CHEBI:29105"/>
    </ligand>
</feature>
<feature type="binding site" evidence="1">
    <location>
        <position position="54"/>
    </location>
    <ligand>
        <name>Zn(2+)</name>
        <dbReference type="ChEBI" id="CHEBI:29105"/>
    </ligand>
</feature>
<protein>
    <recommendedName>
        <fullName evidence="1">Acetyl-coenzyme A carboxylase carboxyl transferase subunit beta</fullName>
        <shortName evidence="1">ACCase subunit beta</shortName>
        <shortName evidence="1">Acetyl-CoA carboxylase carboxyltransferase subunit beta</shortName>
        <ecNumber evidence="1">2.1.3.15</ecNumber>
    </recommendedName>
</protein>
<comment type="function">
    <text evidence="1">Component of the acetyl coenzyme A carboxylase (ACC) complex. Biotin carboxylase (BC) catalyzes the carboxylation of biotin on its carrier protein (BCCP) and then the CO(2) group is transferred by the transcarboxylase to acetyl-CoA to form malonyl-CoA.</text>
</comment>
<comment type="catalytic activity">
    <reaction evidence="1">
        <text>N(6)-carboxybiotinyl-L-lysyl-[protein] + acetyl-CoA = N(6)-biotinyl-L-lysyl-[protein] + malonyl-CoA</text>
        <dbReference type="Rhea" id="RHEA:54728"/>
        <dbReference type="Rhea" id="RHEA-COMP:10505"/>
        <dbReference type="Rhea" id="RHEA-COMP:10506"/>
        <dbReference type="ChEBI" id="CHEBI:57288"/>
        <dbReference type="ChEBI" id="CHEBI:57384"/>
        <dbReference type="ChEBI" id="CHEBI:83144"/>
        <dbReference type="ChEBI" id="CHEBI:83145"/>
        <dbReference type="EC" id="2.1.3.15"/>
    </reaction>
</comment>
<comment type="cofactor">
    <cofactor evidence="1">
        <name>Zn(2+)</name>
        <dbReference type="ChEBI" id="CHEBI:29105"/>
    </cofactor>
    <text evidence="1">Binds 1 zinc ion per subunit.</text>
</comment>
<comment type="pathway">
    <text evidence="1">Lipid metabolism; malonyl-CoA biosynthesis; malonyl-CoA from acetyl-CoA: step 1/1.</text>
</comment>
<comment type="subunit">
    <text evidence="1">Acetyl-CoA carboxylase is a heterohexamer composed of biotin carboxyl carrier protein (AccB), biotin carboxylase (AccC) and two subunits each of ACCase subunit alpha (AccA) and ACCase subunit beta (AccD).</text>
</comment>
<comment type="subcellular location">
    <subcellularLocation>
        <location evidence="1">Cytoplasm</location>
    </subcellularLocation>
</comment>
<comment type="similarity">
    <text evidence="1">Belongs to the AccD/PCCB family.</text>
</comment>